<evidence type="ECO:0000255" key="1">
    <source>
        <dbReference type="HAMAP-Rule" id="MF_00444"/>
    </source>
</evidence>
<protein>
    <recommendedName>
        <fullName evidence="1">ATP-dependent Clp protease proteolytic subunit 2</fullName>
        <ecNumber evidence="1">3.4.21.92</ecNumber>
    </recommendedName>
    <alternativeName>
        <fullName evidence="1">Endopeptidase Clp 2</fullName>
    </alternativeName>
</protein>
<organism>
    <name type="scientific">Corynebacterium efficiens (strain DSM 44549 / YS-314 / AJ 12310 / JCM 11189 / NBRC 100395)</name>
    <dbReference type="NCBI Taxonomy" id="196164"/>
    <lineage>
        <taxon>Bacteria</taxon>
        <taxon>Bacillati</taxon>
        <taxon>Actinomycetota</taxon>
        <taxon>Actinomycetes</taxon>
        <taxon>Mycobacteriales</taxon>
        <taxon>Corynebacteriaceae</taxon>
        <taxon>Corynebacterium</taxon>
    </lineage>
</organism>
<sequence length="199" mass="21425">MSDNLNMTAPGAGTGYSGDIFDRLLRERIIFLGSQVDDEIANKLCAQILLLSAEDPTRDISLYINSPGGSVTAGMAIYDTMKYSPCDIATYGMGLAASMGQFLLSGGTPGKRYALPHARIMMHQPSAGVGGTAADIAIQAEQFAQTKREMAKLIAEHTGQTFEQVTKDSDRDRWFTAEQAKEYGLVDHVITLAEGPISN</sequence>
<name>CLPP2_COREF</name>
<proteinExistence type="inferred from homology"/>
<gene>
    <name evidence="1" type="primary">clpP2</name>
    <name type="ordered locus">CE2312</name>
</gene>
<reference key="1">
    <citation type="journal article" date="2003" name="Genome Res.">
        <title>Comparative complete genome sequence analysis of the amino acid replacements responsible for the thermostability of Corynebacterium efficiens.</title>
        <authorList>
            <person name="Nishio Y."/>
            <person name="Nakamura Y."/>
            <person name="Kawarabayasi Y."/>
            <person name="Usuda Y."/>
            <person name="Kimura E."/>
            <person name="Sugimoto S."/>
            <person name="Matsui K."/>
            <person name="Yamagishi A."/>
            <person name="Kikuchi H."/>
            <person name="Ikeo K."/>
            <person name="Gojobori T."/>
        </authorList>
    </citation>
    <scope>NUCLEOTIDE SEQUENCE [LARGE SCALE GENOMIC DNA]</scope>
    <source>
        <strain>DSM 44549 / YS-314 / AJ 12310 / JCM 11189 / NBRC 100395</strain>
    </source>
</reference>
<feature type="chain" id="PRO_0000179544" description="ATP-dependent Clp protease proteolytic subunit 2">
    <location>
        <begin position="1"/>
        <end position="199"/>
    </location>
</feature>
<feature type="active site" description="Nucleophile" evidence="1">
    <location>
        <position position="98"/>
    </location>
</feature>
<feature type="active site" evidence="1">
    <location>
        <position position="123"/>
    </location>
</feature>
<dbReference type="EC" id="3.4.21.92" evidence="1"/>
<dbReference type="EMBL" id="BA000035">
    <property type="protein sequence ID" value="BAC19122.1"/>
    <property type="molecule type" value="Genomic_DNA"/>
</dbReference>
<dbReference type="RefSeq" id="WP_006768316.1">
    <property type="nucleotide sequence ID" value="NZ_GG700683.1"/>
</dbReference>
<dbReference type="SMR" id="Q8FN36"/>
<dbReference type="STRING" id="196164.gene:10742743"/>
<dbReference type="MEROPS" id="S14.008"/>
<dbReference type="KEGG" id="cef:CE2312"/>
<dbReference type="eggNOG" id="COG0740">
    <property type="taxonomic scope" value="Bacteria"/>
</dbReference>
<dbReference type="HOGENOM" id="CLU_058707_3_2_11"/>
<dbReference type="OrthoDB" id="9802800at2"/>
<dbReference type="Proteomes" id="UP000001409">
    <property type="component" value="Chromosome"/>
</dbReference>
<dbReference type="GO" id="GO:0005737">
    <property type="term" value="C:cytoplasm"/>
    <property type="evidence" value="ECO:0007669"/>
    <property type="project" value="UniProtKB-SubCell"/>
</dbReference>
<dbReference type="GO" id="GO:0009368">
    <property type="term" value="C:endopeptidase Clp complex"/>
    <property type="evidence" value="ECO:0007669"/>
    <property type="project" value="TreeGrafter"/>
</dbReference>
<dbReference type="GO" id="GO:0004176">
    <property type="term" value="F:ATP-dependent peptidase activity"/>
    <property type="evidence" value="ECO:0007669"/>
    <property type="project" value="InterPro"/>
</dbReference>
<dbReference type="GO" id="GO:0051117">
    <property type="term" value="F:ATPase binding"/>
    <property type="evidence" value="ECO:0007669"/>
    <property type="project" value="TreeGrafter"/>
</dbReference>
<dbReference type="GO" id="GO:0004252">
    <property type="term" value="F:serine-type endopeptidase activity"/>
    <property type="evidence" value="ECO:0007669"/>
    <property type="project" value="UniProtKB-UniRule"/>
</dbReference>
<dbReference type="GO" id="GO:0006515">
    <property type="term" value="P:protein quality control for misfolded or incompletely synthesized proteins"/>
    <property type="evidence" value="ECO:0007669"/>
    <property type="project" value="TreeGrafter"/>
</dbReference>
<dbReference type="CDD" id="cd07017">
    <property type="entry name" value="S14_ClpP_2"/>
    <property type="match status" value="1"/>
</dbReference>
<dbReference type="FunFam" id="3.90.226.10:FF:000002">
    <property type="entry name" value="ATP-dependent Clp protease proteolytic subunit"/>
    <property type="match status" value="1"/>
</dbReference>
<dbReference type="Gene3D" id="3.90.226.10">
    <property type="entry name" value="2-enoyl-CoA Hydratase, Chain A, domain 1"/>
    <property type="match status" value="1"/>
</dbReference>
<dbReference type="HAMAP" id="MF_00444">
    <property type="entry name" value="ClpP"/>
    <property type="match status" value="1"/>
</dbReference>
<dbReference type="InterPro" id="IPR001907">
    <property type="entry name" value="ClpP"/>
</dbReference>
<dbReference type="InterPro" id="IPR029045">
    <property type="entry name" value="ClpP/crotonase-like_dom_sf"/>
</dbReference>
<dbReference type="InterPro" id="IPR023562">
    <property type="entry name" value="ClpP/TepA"/>
</dbReference>
<dbReference type="InterPro" id="IPR033135">
    <property type="entry name" value="ClpP_His_AS"/>
</dbReference>
<dbReference type="NCBIfam" id="NF001368">
    <property type="entry name" value="PRK00277.1"/>
    <property type="match status" value="1"/>
</dbReference>
<dbReference type="NCBIfam" id="NF009205">
    <property type="entry name" value="PRK12553.1"/>
    <property type="match status" value="1"/>
</dbReference>
<dbReference type="PANTHER" id="PTHR10381">
    <property type="entry name" value="ATP-DEPENDENT CLP PROTEASE PROTEOLYTIC SUBUNIT"/>
    <property type="match status" value="1"/>
</dbReference>
<dbReference type="PANTHER" id="PTHR10381:SF70">
    <property type="entry name" value="ATP-DEPENDENT CLP PROTEASE PROTEOLYTIC SUBUNIT"/>
    <property type="match status" value="1"/>
</dbReference>
<dbReference type="Pfam" id="PF00574">
    <property type="entry name" value="CLP_protease"/>
    <property type="match status" value="1"/>
</dbReference>
<dbReference type="PRINTS" id="PR00127">
    <property type="entry name" value="CLPPROTEASEP"/>
</dbReference>
<dbReference type="SUPFAM" id="SSF52096">
    <property type="entry name" value="ClpP/crotonase"/>
    <property type="match status" value="1"/>
</dbReference>
<dbReference type="PROSITE" id="PS00382">
    <property type="entry name" value="CLP_PROTEASE_HIS"/>
    <property type="match status" value="1"/>
</dbReference>
<accession>Q8FN36</accession>
<comment type="function">
    <text evidence="1">Cleaves peptides in various proteins in a process that requires ATP hydrolysis. Has a chymotrypsin-like activity. Plays a major role in the degradation of misfolded proteins.</text>
</comment>
<comment type="catalytic activity">
    <reaction evidence="1">
        <text>Hydrolysis of proteins to small peptides in the presence of ATP and magnesium. alpha-casein is the usual test substrate. In the absence of ATP, only oligopeptides shorter than five residues are hydrolyzed (such as succinyl-Leu-Tyr-|-NHMec, and Leu-Tyr-Leu-|-Tyr-Trp, in which cleavage of the -Tyr-|-Leu- and -Tyr-|-Trp bonds also occurs).</text>
        <dbReference type="EC" id="3.4.21.92"/>
    </reaction>
</comment>
<comment type="subunit">
    <text evidence="1">Fourteen ClpP subunits assemble into 2 heptameric rings which stack back to back to give a disk-like structure with a central cavity, resembling the structure of eukaryotic proteasomes.</text>
</comment>
<comment type="subcellular location">
    <subcellularLocation>
        <location evidence="1">Cytoplasm</location>
    </subcellularLocation>
</comment>
<comment type="similarity">
    <text evidence="1">Belongs to the peptidase S14 family.</text>
</comment>
<keyword id="KW-0963">Cytoplasm</keyword>
<keyword id="KW-0378">Hydrolase</keyword>
<keyword id="KW-0645">Protease</keyword>
<keyword id="KW-1185">Reference proteome</keyword>
<keyword id="KW-0720">Serine protease</keyword>